<accession>G5ECG0</accession>
<feature type="chain" id="PRO_0000436234" description="Transforming acid coiled-coil-containing protein 1" evidence="10">
    <location>
        <begin position="1"/>
        <end position="260"/>
    </location>
</feature>
<feature type="region of interest" description="Disordered" evidence="2">
    <location>
        <begin position="1"/>
        <end position="43"/>
    </location>
</feature>
<feature type="coiled-coil region" evidence="1">
    <location>
        <begin position="108"/>
        <end position="249"/>
    </location>
</feature>
<feature type="mutagenesis site" description="In or455; temperature sensitive mutant which is embryonic lethal at 26 degrees Celsius, with defective pronuclear migration." evidence="7">
    <original>M</original>
    <variation>I</variation>
    <location>
        <position position="58"/>
    </location>
</feature>
<feature type="mutagenesis site" description="No obvious phenotype." evidence="8">
    <original>C</original>
    <variation>W</variation>
    <location>
        <position position="94"/>
    </location>
</feature>
<feature type="mutagenesis site" description="In or369 and or402; temperature sensitive mutant which is embryonic lethal at 26 degrees Celsius, with defective pronuclear migration and reduced zyg-9 binding." evidence="7">
    <original>L</original>
    <variation>F</variation>
    <location>
        <position position="229"/>
    </location>
</feature>
<evidence type="ECO:0000255" key="1"/>
<evidence type="ECO:0000256" key="2">
    <source>
        <dbReference type="SAM" id="MobiDB-lite"/>
    </source>
</evidence>
<evidence type="ECO:0000269" key="3">
    <source>
    </source>
</evidence>
<evidence type="ECO:0000269" key="4">
    <source>
    </source>
</evidence>
<evidence type="ECO:0000269" key="5">
    <source>
    </source>
</evidence>
<evidence type="ECO:0000269" key="6">
    <source>
    </source>
</evidence>
<evidence type="ECO:0000269" key="7">
    <source>
    </source>
</evidence>
<evidence type="ECO:0000269" key="8">
    <source>
    </source>
</evidence>
<evidence type="ECO:0000269" key="9">
    <source>
    </source>
</evidence>
<evidence type="ECO:0000305" key="10"/>
<evidence type="ECO:0000312" key="11">
    <source>
        <dbReference type="EMBL" id="AAG49387.1"/>
    </source>
</evidence>
<evidence type="ECO:0000312" key="12">
    <source>
        <dbReference type="Proteomes" id="UP000001940"/>
    </source>
</evidence>
<evidence type="ECO:0000312" key="13">
    <source>
        <dbReference type="WormBase" id="Y54E2A.3"/>
    </source>
</evidence>
<proteinExistence type="evidence at protein level"/>
<reference evidence="12" key="1">
    <citation type="journal article" date="1998" name="Science">
        <title>Genome sequence of the nematode C. elegans: a platform for investigating biology.</title>
        <authorList>
            <consortium name="The C. elegans sequencing consortium"/>
        </authorList>
    </citation>
    <scope>NUCLEOTIDE SEQUENCE [LARGE SCALE GENOMIC DNA]</scope>
    <source>
        <strain evidence="12">Bristol N2</strain>
    </source>
</reference>
<reference evidence="11" key="2">
    <citation type="submission" date="2000-08" db="EMBL/GenBank/DDBJ databases">
        <title>The Caenorhabditis elegans transcriptome project, a complementary view of the genome.</title>
        <authorList>
            <person name="Kohara Y."/>
            <person name="Shin'i T."/>
            <person name="Suzuki Y."/>
            <person name="Sugano S."/>
            <person name="Potdevin M."/>
            <person name="Thierry-Mieg Y."/>
            <person name="Thierry-Mieg D."/>
            <person name="Thierry-Mieg J."/>
        </authorList>
    </citation>
    <scope>NUCLEOTIDE SEQUENCE [LARGE SCALE MRNA]</scope>
    <source>
        <strain>Bristol N2</strain>
    </source>
</reference>
<reference evidence="10" key="3">
    <citation type="journal article" date="2003" name="Curr. Biol.">
        <title>TAC-1 and ZYG-9 form a complex that promotes microtubule assembly in C. elegans embryos.</title>
        <authorList>
            <person name="Bellanger J.M."/>
            <person name="Goenczy P."/>
        </authorList>
    </citation>
    <scope>FUNCTION</scope>
    <scope>SUBUNIT</scope>
    <scope>SUBCELLULAR LOCATION</scope>
    <scope>DISRUPTION PHENOTYPE</scope>
</reference>
<reference evidence="10" key="4">
    <citation type="journal article" date="2003" name="Curr. Biol.">
        <title>TAC-1, a regulator of microtubule length in the C. elegans embryo.</title>
        <authorList>
            <person name="Le Bot N."/>
            <person name="Tsai M.C."/>
            <person name="Andrews R.K."/>
            <person name="Ahringer J."/>
        </authorList>
    </citation>
    <scope>FUNCTION</scope>
    <scope>SUBUNIT</scope>
    <scope>SUBCELLULAR LOCATION</scope>
    <scope>DISRUPTION PHENOTYPE</scope>
</reference>
<reference evidence="10" key="5">
    <citation type="journal article" date="2003" name="Curr. Biol.">
        <title>Caenorhabditis elegans TAC-1 and ZYG-9 form a complex that is essential for long astral and spindle microtubules.</title>
        <authorList>
            <person name="Srayko M."/>
            <person name="Quintin S."/>
            <person name="Schwager A."/>
            <person name="Hyman A.A."/>
        </authorList>
    </citation>
    <scope>FUNCTION</scope>
    <scope>SUBUNIT</scope>
    <scope>SUBCELLULAR LOCATION</scope>
    <scope>DISRUPTION PHENOTYPE</scope>
</reference>
<reference evidence="10" key="6">
    <citation type="journal article" date="2005" name="Dev. Cell">
        <title>Identification and characterization of factors required for microtubule growth and nucleation in the early C. elegans embryo.</title>
        <authorList>
            <person name="Srayko M."/>
            <person name="Kaya A."/>
            <person name="Stamford J."/>
            <person name="Hyman A.A."/>
        </authorList>
    </citation>
    <scope>FUNCTION</scope>
    <scope>DISRUPTION PHENOTYPE</scope>
</reference>
<reference evidence="10" key="7">
    <citation type="journal article" date="2007" name="J. Cell Sci.">
        <title>ZYG-9, TAC-1 and ZYG-8 together ensure correct microtubule function throughout the cell cycle of C. elegans embryos.</title>
        <authorList>
            <person name="Bellanger J.M."/>
            <person name="Carter J.C."/>
            <person name="Phillips J.B."/>
            <person name="Canard C."/>
            <person name="Bowerman B."/>
            <person name="Gonczy P."/>
        </authorList>
    </citation>
    <scope>FUNCTION</scope>
    <scope>SUBUNIT</scope>
    <scope>SUBCELLULAR LOCATION</scope>
    <scope>DISRUPTION PHENOTYPE</scope>
    <scope>MUTAGENESIS OF MET-58 AND LEU-229</scope>
</reference>
<reference evidence="10" key="8">
    <citation type="journal article" date="2012" name="PLoS ONE">
        <title>Mos1-mediated transgenesis to probe consequences of single gene mutations in variation-rich isolates of Caenorhabditis elegans.</title>
        <authorList>
            <person name="Tarailo-Graovac M."/>
            <person name="Chen N."/>
        </authorList>
    </citation>
    <scope>DISRUPTION PHENOTYPE</scope>
    <scope>MUTAGENESIS OF CYS-94</scope>
</reference>
<reference evidence="10" key="9">
    <citation type="journal article" date="2015" name="Elife">
        <title>Axon injury triggers EFA-6 mediated destabilization of axonal microtubules via TACC and doublecortin like kinase.</title>
        <authorList>
            <person name="Chen L."/>
            <person name="Chuang M."/>
            <person name="Koorman T."/>
            <person name="Boxem M."/>
            <person name="Jin Y."/>
            <person name="Chisholm A.D."/>
        </authorList>
    </citation>
    <scope>FUNCTION</scope>
    <scope>INTERACTION WITH EFA-6</scope>
    <scope>SUBCELLULAR LOCATION</scope>
    <scope>TISSUE SPECIFICITY</scope>
</reference>
<dbReference type="EMBL" id="BX284602">
    <property type="protein sequence ID" value="CAA21677.1"/>
    <property type="molecule type" value="Genomic_DNA"/>
</dbReference>
<dbReference type="EMBL" id="AF326937">
    <property type="protein sequence ID" value="AAG49387.1"/>
    <property type="molecule type" value="mRNA"/>
</dbReference>
<dbReference type="PIR" id="T27144">
    <property type="entry name" value="T27144"/>
</dbReference>
<dbReference type="RefSeq" id="NP_497059.1">
    <property type="nucleotide sequence ID" value="NM_064658.8"/>
</dbReference>
<dbReference type="SMR" id="G5ECG0"/>
<dbReference type="ComplexPortal" id="CPX-372">
    <property type="entry name" value="Zyg-9/Tac-1 complex"/>
</dbReference>
<dbReference type="ComplexPortal" id="CPX-374">
    <property type="entry name" value="Zyg-8/Tac-1 complex"/>
</dbReference>
<dbReference type="FunCoup" id="G5ECG0">
    <property type="interactions" value="16"/>
</dbReference>
<dbReference type="IntAct" id="G5ECG0">
    <property type="interactions" value="47"/>
</dbReference>
<dbReference type="MINT" id="G5ECG0"/>
<dbReference type="STRING" id="6239.Y54E2A.3.1"/>
<dbReference type="PaxDb" id="6239-Y54E2A.3"/>
<dbReference type="PeptideAtlas" id="G5ECG0"/>
<dbReference type="EnsemblMetazoa" id="Y54E2A.3.1">
    <property type="protein sequence ID" value="Y54E2A.3.1"/>
    <property type="gene ID" value="WBGene00006381"/>
</dbReference>
<dbReference type="GeneID" id="175133"/>
<dbReference type="KEGG" id="cel:CELE_Y54E2A.3"/>
<dbReference type="AGR" id="WB:WBGene00006381"/>
<dbReference type="CTD" id="175133"/>
<dbReference type="WormBase" id="Y54E2A.3">
    <property type="protein sequence ID" value="CE20302"/>
    <property type="gene ID" value="WBGene00006381"/>
    <property type="gene designation" value="tac-1"/>
</dbReference>
<dbReference type="eggNOG" id="ENOG502TKNX">
    <property type="taxonomic scope" value="Eukaryota"/>
</dbReference>
<dbReference type="HOGENOM" id="CLU_071396_0_0_1"/>
<dbReference type="InParanoid" id="G5ECG0"/>
<dbReference type="OMA" id="EFEVRRC"/>
<dbReference type="OrthoDB" id="10255048at2759"/>
<dbReference type="SignaLink" id="G5ECG0"/>
<dbReference type="CD-CODE" id="1E117272">
    <property type="entry name" value="Centrosome"/>
</dbReference>
<dbReference type="PRO" id="PR:G5ECG0"/>
<dbReference type="Proteomes" id="UP000001940">
    <property type="component" value="Chromosome II"/>
</dbReference>
<dbReference type="Bgee" id="WBGene00006381">
    <property type="expression patterns" value="Expressed in germ line (C elegans) and 4 other cell types or tissues"/>
</dbReference>
<dbReference type="GO" id="GO:0030424">
    <property type="term" value="C:axon"/>
    <property type="evidence" value="ECO:0007669"/>
    <property type="project" value="UniProtKB-SubCell"/>
</dbReference>
<dbReference type="GO" id="GO:0005813">
    <property type="term" value="C:centrosome"/>
    <property type="evidence" value="ECO:0000314"/>
    <property type="project" value="UniProtKB"/>
</dbReference>
<dbReference type="GO" id="GO:0005737">
    <property type="term" value="C:cytoplasm"/>
    <property type="evidence" value="ECO:0000314"/>
    <property type="project" value="UniProtKB"/>
</dbReference>
<dbReference type="GO" id="GO:0000776">
    <property type="term" value="C:kinetochore"/>
    <property type="evidence" value="ECO:0000314"/>
    <property type="project" value="WormBase"/>
</dbReference>
<dbReference type="GO" id="GO:0072687">
    <property type="term" value="C:meiotic spindle"/>
    <property type="evidence" value="ECO:0000269"/>
    <property type="project" value="ComplexPortal"/>
</dbReference>
<dbReference type="GO" id="GO:0061673">
    <property type="term" value="C:mitotic spindle astral microtubule"/>
    <property type="evidence" value="ECO:0000314"/>
    <property type="project" value="ComplexPortal"/>
</dbReference>
<dbReference type="GO" id="GO:1990498">
    <property type="term" value="C:mitotic spindle microtubule"/>
    <property type="evidence" value="ECO:0000314"/>
    <property type="project" value="ComplexPortal"/>
</dbReference>
<dbReference type="GO" id="GO:0043204">
    <property type="term" value="C:perikaryon"/>
    <property type="evidence" value="ECO:0007669"/>
    <property type="project" value="UniProtKB-SubCell"/>
</dbReference>
<dbReference type="GO" id="GO:0005819">
    <property type="term" value="C:spindle"/>
    <property type="evidence" value="ECO:0000314"/>
    <property type="project" value="WormBase"/>
</dbReference>
<dbReference type="GO" id="GO:0000922">
    <property type="term" value="C:spindle pole"/>
    <property type="evidence" value="ECO:0000314"/>
    <property type="project" value="WormBase"/>
</dbReference>
<dbReference type="GO" id="GO:0019904">
    <property type="term" value="F:protein domain specific binding"/>
    <property type="evidence" value="ECO:0000353"/>
    <property type="project" value="WormBase"/>
</dbReference>
<dbReference type="GO" id="GO:0030953">
    <property type="term" value="P:astral microtubule organization"/>
    <property type="evidence" value="ECO:0000315"/>
    <property type="project" value="WormBase"/>
</dbReference>
<dbReference type="GO" id="GO:0051301">
    <property type="term" value="P:cell division"/>
    <property type="evidence" value="ECO:0000315"/>
    <property type="project" value="WormBase"/>
</dbReference>
<dbReference type="GO" id="GO:0009792">
    <property type="term" value="P:embryo development ending in birth or egg hatching"/>
    <property type="evidence" value="ECO:0000315"/>
    <property type="project" value="WormBase"/>
</dbReference>
<dbReference type="GO" id="GO:0051321">
    <property type="term" value="P:meiotic cell cycle"/>
    <property type="evidence" value="ECO:0000315"/>
    <property type="project" value="WormBase"/>
</dbReference>
<dbReference type="GO" id="GO:0007017">
    <property type="term" value="P:microtubule-based process"/>
    <property type="evidence" value="ECO:0000314"/>
    <property type="project" value="ComplexPortal"/>
</dbReference>
<dbReference type="GO" id="GO:0000022">
    <property type="term" value="P:mitotic spindle elongation"/>
    <property type="evidence" value="ECO:0000315"/>
    <property type="project" value="WormBase"/>
</dbReference>
<dbReference type="GO" id="GO:0007052">
    <property type="term" value="P:mitotic spindle organization"/>
    <property type="evidence" value="ECO:0000315"/>
    <property type="project" value="WormBase"/>
</dbReference>
<dbReference type="GO" id="GO:0007026">
    <property type="term" value="P:negative regulation of microtubule depolymerization"/>
    <property type="evidence" value="ECO:0000315"/>
    <property type="project" value="WormBase"/>
</dbReference>
<dbReference type="GO" id="GO:0035046">
    <property type="term" value="P:pronuclear migration"/>
    <property type="evidence" value="ECO:0000315"/>
    <property type="project" value="WormBase"/>
</dbReference>
<dbReference type="GO" id="GO:0031113">
    <property type="term" value="P:regulation of microtubule polymerization"/>
    <property type="evidence" value="ECO:0000315"/>
    <property type="project" value="WormBase"/>
</dbReference>
<dbReference type="InterPro" id="IPR007707">
    <property type="entry name" value="TACC_C"/>
</dbReference>
<dbReference type="Pfam" id="PF05010">
    <property type="entry name" value="TACC_C"/>
    <property type="match status" value="1"/>
</dbReference>
<sequence length="260" mass="28543">MSLNTTFTKEDGTEVVIPFNGSQNGHPENEEPEVEEAAEPSSSVETLCGATRGDIIVMKHTTKALTELIERLLHSDEFEVRRCSNGQIISQGRCNGTTPGNGIGGGGASSEELEKALKDRDAARAEADKLHANYATLFASFNTVREAANDIRGEYEDARDKLKLAAAEVDEWQAKFLAVKDNANSELERASVEYDDLLRSHDENTKGLRLRVKRQEIELSSKNDEIKVLTNRVSELSQICDQLLNDVDVSDGMSVISTDA</sequence>
<comment type="function">
    <text evidence="3 4 5 7 8 9">Involved in microtubule formation, polymerization and assembly, regulating microtubule nucleation and length (PubMed:12956950, PubMed:12956951, PubMed:16054029). Plays a role in pronuclear migration and mitotic and meiotic spindle elongation during early embryogenesis (PubMed:12956950, PubMed:12956951). In complex with zyg-9, functions during the early stages of embryonic development to regulate microtubule assembly throughout the cell cycle (PubMed:12956950, PubMed:12956952). Specifically, the complex is required for the formation and growth of astral microtubules and spindle microtubules during mitotic spindle assembly (PubMed:12956952). At anaphase, the complex is required for mitotic spindle positioning in one-cell stage embryos (PubMed:17666432). The complex acts in a partially redundant manner with the tac-1/zyg-8 complex to regulate microtubule assembly and processes during interphase, mitosis and meiosis in embryos (PubMed:17666432). Plays a role in injury-induced axonal regrowth, regeneration and microtubule stability in PLM neurons and this may be downstream of efa-6 (PubMed:26339988).</text>
</comment>
<comment type="subunit">
    <text evidence="3 4 5 7 9">Interacts with zyg-9 to form a heterodimer (PubMed:12956950, PubMed:12956951, PubMed:12956952). Interacts with zyg-8 to form a heterodimer (PubMed:17666432). Interacts with efa-6 (via N-terminus) (PubMed:26339988).</text>
</comment>
<comment type="interaction">
    <interactant intactId="EBI-320612">
        <id>G5ECG0</id>
    </interactant>
    <interactant intactId="EBI-323542">
        <id>O01901</id>
        <label>ddl-1</label>
    </interactant>
    <organismsDiffer>false</organismsDiffer>
    <experiments>3</experiments>
</comment>
<comment type="interaction">
    <interactant intactId="EBI-320612">
        <id>G5ECG0</id>
    </interactant>
    <interactant intactId="EBI-312458">
        <id>G5ECY0</id>
        <label>dlg-1</label>
    </interactant>
    <organismsDiffer>false</organismsDiffer>
    <experiments>3</experiments>
</comment>
<comment type="interaction">
    <interactant intactId="EBI-320612">
        <id>G5ECG0</id>
    </interactant>
    <interactant intactId="EBI-316403">
        <id>Q22227</id>
        <label>mig-5</label>
    </interactant>
    <organismsDiffer>false</organismsDiffer>
    <experiments>3</experiments>
</comment>
<comment type="interaction">
    <interactant intactId="EBI-320612">
        <id>G5ECG0</id>
    </interactant>
    <interactant intactId="EBI-327642">
        <id>Q95QA6</id>
        <label>pat-12</label>
    </interactant>
    <organismsDiffer>false</organismsDiffer>
    <experiments>3</experiments>
</comment>
<comment type="interaction">
    <interactant intactId="EBI-320612">
        <id>G5ECG0</id>
    </interactant>
    <interactant intactId="EBI-331795">
        <id>Q95QC4</id>
        <label>zyg-8</label>
    </interactant>
    <organismsDiffer>false</organismsDiffer>
    <experiments>3</experiments>
</comment>
<comment type="interaction">
    <interactant intactId="EBI-320612">
        <id>G5ECG0</id>
    </interactant>
    <interactant intactId="EBI-320102">
        <id>G5EEM5</id>
        <label>zyg-9</label>
    </interactant>
    <organismsDiffer>false</organismsDiffer>
    <experiments>13</experiments>
</comment>
<comment type="subcellular location">
    <subcellularLocation>
        <location evidence="3 4">Cytoplasm</location>
        <location evidence="3 4">Cytoskeleton</location>
        <location evidence="3 4">Spindle pole</location>
    </subcellularLocation>
    <subcellularLocation>
        <location evidence="3 4 5 7">Cytoplasm</location>
        <location evidence="3 4 5 7">Cytoskeleton</location>
        <location evidence="3 4 5 7">Microtubule organizing center</location>
        <location evidence="3 4 5 7">Centrosome</location>
    </subcellularLocation>
    <subcellularLocation>
        <location evidence="3 7">Cytoplasm</location>
    </subcellularLocation>
    <subcellularLocation>
        <location evidence="5">Chromosome</location>
        <location evidence="5">Centromere</location>
        <location evidence="5">Kinetochore</location>
    </subcellularLocation>
    <subcellularLocation>
        <location evidence="9">Cell projection</location>
        <location evidence="9">Axon</location>
    </subcellularLocation>
    <subcellularLocation>
        <location evidence="9">Perikaryon</location>
    </subcellularLocation>
    <text evidence="3 4 5 7 9">Initially enriched at meiotic spindle poles, but then recruited to the sperm centrosome (PubMed:12956950, PubMed:12956951). Localized to centrosomes early in pronuclear migration (PubMed:12956952). Centrosomal localization is dependent on air-1, tbg-1 and zyg-9 and is also controlled during the cell cycle, with high expression during prophase and metaphase, but with expression reducing from anaphase to telophase (PubMed:12956950, PubMed:12956951, PubMed:12956952). Accumulates at the centrosome during interphase, ready for the next mitotic cycle (PubMed:12956951). Cycles between cytoplasm and centrosome during mitosis in a cell cycle-dependent manner (PubMed:12956950, PubMed:17666432). Diffuse localization along the axon and localizes to perinuclear spots in the perikaryon (PubMed:26339988). Following injury co-localizes with efa-6 and ptrn-1 in puncta of the perikaryon (PubMed:26339988). The zyg-9/tac-1 complex localizes to centrosomes throughout the cell cycle and the kinetochore of metaphase and early anaphase chromosomes (PubMed:12956952).</text>
</comment>
<comment type="tissue specificity">
    <text evidence="9">Expressed in touch neurons.</text>
</comment>
<comment type="disruption phenotype">
    <text evidence="3 4 5 6 7">Maternal-effect embryonic lethal (PubMed:23155404). RNAi-mediated knockdown results in a meiotic defect in 30% of early embryos and defective microtubule related processes during the first cell cycle in early embryogenesis (PubMed:12956950, PubMed:12956951, PubMed:12956952). In one-cell embryos, the maternal pronuclei fail to migrate and the breakdown of the pronuclear envelope is delayed (PubMed:12956950, PubMed:12956951, PubMed:12956952). The sperm pronuclear complex also exhibits a migratory defect whereby it does not move to the center of the embryo or rotate on the anterior-posterior axis leading to the assembly of a misaligned spindle at the posterior of the embryo and ingression of the cleavage furrow from the posterior cortex (PubMed:12956950, PubMed:12956951, PubMed:12956952, PubMed:17666432). Reduced microtubule growth rate in embryos (PubMed:16054029). Defective microtubule elongation in one-cell embryos resulting in short microtubules that extend from the centrosome, but do not extend to the cortex, and mitotic spindles that are 20% shorter than in wild-type one-cell embryos (PubMed:12956950, PubMed:12956951). Specifically, one-cell embryos have shorter astral and mitotic spindle microtubules (PubMed:12956952). Reduced stability of the zyg-9/tac-1 complex with reduced accumulation of zyg-9 at the centrosomes (PubMed:12956950).</text>
</comment>
<comment type="similarity">
    <text evidence="10">Belongs to the TACC family.</text>
</comment>
<keyword id="KW-0131">Cell cycle</keyword>
<keyword id="KW-0132">Cell division</keyword>
<keyword id="KW-0966">Cell projection</keyword>
<keyword id="KW-0137">Centromere</keyword>
<keyword id="KW-0158">Chromosome</keyword>
<keyword id="KW-0175">Coiled coil</keyword>
<keyword id="KW-0963">Cytoplasm</keyword>
<keyword id="KW-0206">Cytoskeleton</keyword>
<keyword id="KW-0995">Kinetochore</keyword>
<keyword id="KW-0469">Meiosis</keyword>
<keyword id="KW-0493">Microtubule</keyword>
<keyword id="KW-0498">Mitosis</keyword>
<keyword id="KW-1185">Reference proteome</keyword>
<organism evidence="12">
    <name type="scientific">Caenorhabditis elegans</name>
    <dbReference type="NCBI Taxonomy" id="6239"/>
    <lineage>
        <taxon>Eukaryota</taxon>
        <taxon>Metazoa</taxon>
        <taxon>Ecdysozoa</taxon>
        <taxon>Nematoda</taxon>
        <taxon>Chromadorea</taxon>
        <taxon>Rhabditida</taxon>
        <taxon>Rhabditina</taxon>
        <taxon>Rhabditomorpha</taxon>
        <taxon>Rhabditoidea</taxon>
        <taxon>Rhabditidae</taxon>
        <taxon>Peloderinae</taxon>
        <taxon>Caenorhabditis</taxon>
    </lineage>
</organism>
<protein>
    <recommendedName>
        <fullName evidence="13">Transforming acid coiled-coil-containing protein 1</fullName>
    </recommendedName>
</protein>
<name>TACC1_CAEEL</name>
<gene>
    <name evidence="13" type="primary">tac-1</name>
    <name evidence="13" type="synonym">2P40</name>
    <name evidence="13" type="ORF">Y54E2A.3</name>
</gene>